<name>HTOMT_CATRO</name>
<sequence>MDVQSEEFRGAQAQIWSQSCSFITSASLKCAVKLGIPDTIDNHGKPITLSELTNALVPPVHPSKAPFIYRLMRVLAKNGFCSEEQLDGETEPLYSLTPSSRILLKKEPLNLRGIVLTMADPVQLKAWESLSDWYQNEDDSSTAFETAHGKNFWGYSSEHMEHAEFFNEAMASDSQLISKLLIGEYKFLFEGLASLVDIGGGTGTIAKAIAKNFPQLKCTVFDLPHVVANLESKENVEFVAGDMFEKIPSANAIFLKWILHDWNDEDCVKILKSCKKAIPAKGGKVIIIDMVMYSDKKDDHLVKTQTSMDMAMLVNFAAKERCEKEWAFLFKEAGFSDYKIYPKLDFTRSLIEVYP</sequence>
<reference key="1">
    <citation type="journal article" date="2008" name="Plant J.">
        <title>Application of carborundum abrasion for investigating the leaf epidermis: molecular cloning of Catharanthus roseus 16-hydroxytabersonine-16-O-methyltransferase.</title>
        <authorList>
            <person name="Levac D.E."/>
            <person name="Murata J."/>
            <person name="Kim W.S."/>
            <person name="De Luca V."/>
        </authorList>
    </citation>
    <scope>NUCLEOTIDE SEQUENCE [MRNA]</scope>
    <scope>FUNCTION</scope>
    <scope>CATALYTIC ACTIVITY</scope>
    <scope>BIOPHYSICOCHEMICAL PROPERTIES</scope>
    <scope>DEVELOPMENTAL STAGE</scope>
    <scope>TISSUE SPECIFICITY</scope>
</reference>
<reference key="2">
    <citation type="journal article" date="2005" name="Plant J.">
        <title>Localization of tabersonine 16-hydroxylase and 16-OH tabersonine-16-O-methyltransferase to leaf epidermal cells defines them as a major site of precursor biosynthesis in the vindoline pathway in Catharanthus roseus.</title>
        <authorList>
            <person name="Murata J."/>
            <person name="De Luca V."/>
        </authorList>
    </citation>
    <scope>TISSUE SPECIFICITY</scope>
</reference>
<reference key="3">
    <citation type="journal article" date="2011" name="J. Plant Physiol.">
        <title>Spatial organization of the vindoline biosynthetic pathway in Catharanthus roseus.</title>
        <authorList>
            <person name="Guirimand G."/>
            <person name="Guihur A."/>
            <person name="Poutrain P."/>
            <person name="Hericourt F."/>
            <person name="Mahroug S."/>
            <person name="St-Pierre B."/>
            <person name="Burlat V."/>
            <person name="Courdavault V."/>
        </authorList>
    </citation>
    <scope>TISSUE SPECIFICITY</scope>
    <scope>SUBUNIT</scope>
    <scope>SUBCELLULAR LOCATION</scope>
</reference>
<reference key="4">
    <citation type="journal article" date="2017" name="Sci. Rep.">
        <title>Folivory elicits a strong defense reaction in Catharanthus roseus: metabolomic and transcriptomic analyses reveal distinct local and systemic responses.</title>
        <authorList>
            <person name="Duge de Bernonville T."/>
            <person name="Carqueijeiro I."/>
            <person name="Lanoue A."/>
            <person name="Lafontaine F."/>
            <person name="Sanchez Bel P."/>
            <person name="Liesecke F."/>
            <person name="Musset K."/>
            <person name="Oudin A."/>
            <person name="Glevarec G."/>
            <person name="Pichon O."/>
            <person name="Besseau S."/>
            <person name="Clastre M."/>
            <person name="St-Pierre B."/>
            <person name="Flors V."/>
            <person name="Maury S."/>
            <person name="Huguet E."/>
            <person name="O'Connor S.E."/>
            <person name="Courdavault V."/>
        </authorList>
    </citation>
    <scope>INDUCTION BY HERBIVORY</scope>
</reference>
<protein>
    <recommendedName>
        <fullName evidence="6">Tabersonine 16-O-methyltransferase</fullName>
        <ecNumber evidence="3">2.1.1.94</ecNumber>
    </recommendedName>
</protein>
<dbReference type="EC" id="2.1.1.94" evidence="3"/>
<dbReference type="EMBL" id="EF444544">
    <property type="protein sequence ID" value="ABR20103.1"/>
    <property type="molecule type" value="mRNA"/>
</dbReference>
<dbReference type="SMR" id="B0EXJ8"/>
<dbReference type="KEGG" id="ag:ABR20103"/>
<dbReference type="BioCyc" id="MetaCyc:MONOMER-12359"/>
<dbReference type="BRENDA" id="2.1.1.94">
    <property type="organism ID" value="1211"/>
</dbReference>
<dbReference type="UniPathway" id="UPA00365"/>
<dbReference type="GO" id="GO:0005737">
    <property type="term" value="C:cytoplasm"/>
    <property type="evidence" value="ECO:0000314"/>
    <property type="project" value="UniProtKB"/>
</dbReference>
<dbReference type="GO" id="GO:0030766">
    <property type="term" value="F:11-O-demethyl-17-O-deacetylvindoline O-methyltransferase activity"/>
    <property type="evidence" value="ECO:0000314"/>
    <property type="project" value="UniProtKB"/>
</dbReference>
<dbReference type="GO" id="GO:0008171">
    <property type="term" value="F:O-methyltransferase activity"/>
    <property type="evidence" value="ECO:0007669"/>
    <property type="project" value="InterPro"/>
</dbReference>
<dbReference type="GO" id="GO:0042803">
    <property type="term" value="F:protein homodimerization activity"/>
    <property type="evidence" value="ECO:0000314"/>
    <property type="project" value="UniProtKB"/>
</dbReference>
<dbReference type="GO" id="GO:0009821">
    <property type="term" value="P:alkaloid biosynthetic process"/>
    <property type="evidence" value="ECO:0000314"/>
    <property type="project" value="UniProtKB"/>
</dbReference>
<dbReference type="GO" id="GO:0032259">
    <property type="term" value="P:methylation"/>
    <property type="evidence" value="ECO:0000314"/>
    <property type="project" value="UniProtKB"/>
</dbReference>
<dbReference type="CDD" id="cd02440">
    <property type="entry name" value="AdoMet_MTases"/>
    <property type="match status" value="1"/>
</dbReference>
<dbReference type="FunFam" id="1.10.10.10:FF:000213">
    <property type="entry name" value="Coniferyl alcohol 9-O-methyltransferase"/>
    <property type="match status" value="1"/>
</dbReference>
<dbReference type="FunFam" id="3.40.50.150:FF:000057">
    <property type="entry name" value="O-methyltransferase ZRP4"/>
    <property type="match status" value="1"/>
</dbReference>
<dbReference type="Gene3D" id="3.40.50.150">
    <property type="entry name" value="Vaccinia Virus protein VP39"/>
    <property type="match status" value="1"/>
</dbReference>
<dbReference type="Gene3D" id="1.10.10.10">
    <property type="entry name" value="Winged helix-like DNA-binding domain superfamily/Winged helix DNA-binding domain"/>
    <property type="match status" value="1"/>
</dbReference>
<dbReference type="InterPro" id="IPR016461">
    <property type="entry name" value="COMT-like"/>
</dbReference>
<dbReference type="InterPro" id="IPR001077">
    <property type="entry name" value="O_MeTrfase_dom"/>
</dbReference>
<dbReference type="InterPro" id="IPR012967">
    <property type="entry name" value="Plant_O-MeTrfase_dimerisation"/>
</dbReference>
<dbReference type="InterPro" id="IPR029063">
    <property type="entry name" value="SAM-dependent_MTases_sf"/>
</dbReference>
<dbReference type="InterPro" id="IPR036388">
    <property type="entry name" value="WH-like_DNA-bd_sf"/>
</dbReference>
<dbReference type="InterPro" id="IPR036390">
    <property type="entry name" value="WH_DNA-bd_sf"/>
</dbReference>
<dbReference type="PANTHER" id="PTHR11746">
    <property type="entry name" value="O-METHYLTRANSFERASE"/>
    <property type="match status" value="1"/>
</dbReference>
<dbReference type="Pfam" id="PF08100">
    <property type="entry name" value="Dimerisation"/>
    <property type="match status" value="1"/>
</dbReference>
<dbReference type="Pfam" id="PF00891">
    <property type="entry name" value="Methyltransf_2"/>
    <property type="match status" value="1"/>
</dbReference>
<dbReference type="PIRSF" id="PIRSF005739">
    <property type="entry name" value="O-mtase"/>
    <property type="match status" value="1"/>
</dbReference>
<dbReference type="SUPFAM" id="SSF53335">
    <property type="entry name" value="S-adenosyl-L-methionine-dependent methyltransferases"/>
    <property type="match status" value="1"/>
</dbReference>
<dbReference type="SUPFAM" id="SSF46785">
    <property type="entry name" value="Winged helix' DNA-binding domain"/>
    <property type="match status" value="1"/>
</dbReference>
<dbReference type="PROSITE" id="PS51683">
    <property type="entry name" value="SAM_OMT_II"/>
    <property type="match status" value="1"/>
</dbReference>
<feature type="chain" id="PRO_0000412068" description="Tabersonine 16-O-methyltransferase">
    <location>
        <begin position="1"/>
        <end position="355"/>
    </location>
</feature>
<feature type="active site" description="Proton acceptor" evidence="1">
    <location>
        <position position="260"/>
    </location>
</feature>
<feature type="binding site" evidence="1">
    <location>
        <begin position="198"/>
        <end position="201"/>
    </location>
    <ligand>
        <name>S-adenosyl-L-methionine</name>
        <dbReference type="ChEBI" id="CHEBI:59789"/>
    </ligand>
</feature>
<feature type="binding site" evidence="1">
    <location>
        <begin position="222"/>
        <end position="223"/>
    </location>
    <ligand>
        <name>S-adenosyl-L-methionine</name>
        <dbReference type="ChEBI" id="CHEBI:59789"/>
    </ligand>
</feature>
<feature type="binding site" evidence="1">
    <location>
        <position position="222"/>
    </location>
    <ligand>
        <name>S-adenosyl-L-methionine</name>
        <dbReference type="ChEBI" id="CHEBI:59789"/>
    </ligand>
</feature>
<feature type="binding site" evidence="1">
    <location>
        <begin position="242"/>
        <end position="243"/>
    </location>
    <ligand>
        <name>S-adenosyl-L-methionine</name>
        <dbReference type="ChEBI" id="CHEBI:59789"/>
    </ligand>
</feature>
<feature type="binding site" evidence="1">
    <location>
        <position position="256"/>
    </location>
    <ligand>
        <name>S-adenosyl-L-methionine</name>
        <dbReference type="ChEBI" id="CHEBI:59789"/>
    </ligand>
</feature>
<keyword id="KW-0017">Alkaloid metabolism</keyword>
<keyword id="KW-0963">Cytoplasm</keyword>
<keyword id="KW-0489">Methyltransferase</keyword>
<keyword id="KW-0949">S-adenosyl-L-methionine</keyword>
<keyword id="KW-0808">Transferase</keyword>
<gene>
    <name evidence="6" type="primary">16OMT</name>
</gene>
<comment type="function">
    <text evidence="3">16-O-methyltransferase involved in the biosynthesis of vindoline. Highly specific for 16-hydroxytabersonine. No activity with tabersonine, 3-hydroxytyramine, 4-hydroxytyramine, 5-hydroxytryptamine (5HT), 2,3-dihydro-3-hydroxytabersonine, lochnericine, hoerhammericine, 16-hydroxy-2,3-dihydro-3-hydroxytabersonine, 16-hydroxylochnericine, 16-hydroxyhoerhammericine, quercetin, kaempferol and caffeic acid as substrates.</text>
</comment>
<comment type="catalytic activity">
    <reaction evidence="3">
        <text>16-hydroxytabersonine + S-adenosyl-L-methionine = 16-methoxytabersonine + S-adenosyl-L-homocysteine + H(+)</text>
        <dbReference type="Rhea" id="RHEA:20992"/>
        <dbReference type="ChEBI" id="CHEBI:15378"/>
        <dbReference type="ChEBI" id="CHEBI:57856"/>
        <dbReference type="ChEBI" id="CHEBI:58239"/>
        <dbReference type="ChEBI" id="CHEBI:58930"/>
        <dbReference type="ChEBI" id="CHEBI:59789"/>
        <dbReference type="EC" id="2.1.1.94"/>
    </reaction>
</comment>
<comment type="biophysicochemical properties">
    <kinetics>
        <KM evidence="3">2.6 uM for 16-hydroxytabersonine</KM>
        <KM evidence="3">21.7 uM for S-adenosyl-L-methionine</KM>
        <Vmax evidence="3">0.58 mmol/sec/mg enzyme toward 16-hydroxytabersonine</Vmax>
        <Vmax evidence="3">0.79 mmol/sec/mg enzyme toward S-adenosyl-L-methionine</Vmax>
    </kinetics>
    <phDependence>
        <text evidence="3">Optimum pH is 7.0-7.5.</text>
    </phDependence>
</comment>
<comment type="pathway">
    <text>Alkaloid biosynthesis; vindoline biosynthesis.</text>
</comment>
<comment type="subunit">
    <text evidence="4">Homodimer.</text>
</comment>
<comment type="subcellular location">
    <subcellularLocation>
        <location evidence="4">Cytoplasm</location>
    </subcellularLocation>
</comment>
<comment type="tissue specificity">
    <text evidence="2 3 4">Expressed in leaves and flowers. Detected in stems and roots. In leaves, expressed in epidermal cells.</text>
</comment>
<comment type="developmental stage">
    <text evidence="3">Peak of expression in 8-day-old seedlings. Highest expression in the youngest leaf pair.</text>
</comment>
<comment type="induction">
    <text evidence="5">Up-regulated by herbivory.</text>
</comment>
<comment type="similarity">
    <text evidence="7">Belongs to the class I-like SAM-binding methyltransferase superfamily. Cation-independent O-methyltransferase family. COMT subfamily.</text>
</comment>
<evidence type="ECO:0000255" key="1">
    <source>
        <dbReference type="PROSITE-ProRule" id="PRU01020"/>
    </source>
</evidence>
<evidence type="ECO:0000269" key="2">
    <source>
    </source>
</evidence>
<evidence type="ECO:0000269" key="3">
    <source>
    </source>
</evidence>
<evidence type="ECO:0000269" key="4">
    <source>
    </source>
</evidence>
<evidence type="ECO:0000269" key="5">
    <source>
    </source>
</evidence>
<evidence type="ECO:0000303" key="6">
    <source>
    </source>
</evidence>
<evidence type="ECO:0000305" key="7"/>
<proteinExistence type="evidence at protein level"/>
<accession>B0EXJ8</accession>
<organism>
    <name type="scientific">Catharanthus roseus</name>
    <name type="common">Madagascar periwinkle</name>
    <name type="synonym">Vinca rosea</name>
    <dbReference type="NCBI Taxonomy" id="4058"/>
    <lineage>
        <taxon>Eukaryota</taxon>
        <taxon>Viridiplantae</taxon>
        <taxon>Streptophyta</taxon>
        <taxon>Embryophyta</taxon>
        <taxon>Tracheophyta</taxon>
        <taxon>Spermatophyta</taxon>
        <taxon>Magnoliopsida</taxon>
        <taxon>eudicotyledons</taxon>
        <taxon>Gunneridae</taxon>
        <taxon>Pentapetalae</taxon>
        <taxon>asterids</taxon>
        <taxon>lamiids</taxon>
        <taxon>Gentianales</taxon>
        <taxon>Apocynaceae</taxon>
        <taxon>Rauvolfioideae</taxon>
        <taxon>Vinceae</taxon>
        <taxon>Catharanthinae</taxon>
        <taxon>Catharanthus</taxon>
    </lineage>
</organism>